<dbReference type="EC" id="2.1.1.33" evidence="2"/>
<dbReference type="EMBL" id="AE016830">
    <property type="protein sequence ID" value="AAO80512.1"/>
    <property type="molecule type" value="Genomic_DNA"/>
</dbReference>
<dbReference type="RefSeq" id="NP_814441.1">
    <property type="nucleotide sequence ID" value="NC_004668.1"/>
</dbReference>
<dbReference type="RefSeq" id="WP_002371476.1">
    <property type="nucleotide sequence ID" value="NZ_KE136527.1"/>
</dbReference>
<dbReference type="SMR" id="P59719"/>
<dbReference type="STRING" id="226185.EF_0691"/>
<dbReference type="EnsemblBacteria" id="AAO80512">
    <property type="protein sequence ID" value="AAO80512"/>
    <property type="gene ID" value="EF_0691"/>
</dbReference>
<dbReference type="KEGG" id="efa:EF0691"/>
<dbReference type="PATRIC" id="fig|226185.45.peg.2633"/>
<dbReference type="eggNOG" id="COG0220">
    <property type="taxonomic scope" value="Bacteria"/>
</dbReference>
<dbReference type="HOGENOM" id="CLU_050910_2_1_9"/>
<dbReference type="UniPathway" id="UPA00989"/>
<dbReference type="Proteomes" id="UP000001415">
    <property type="component" value="Chromosome"/>
</dbReference>
<dbReference type="GO" id="GO:0043527">
    <property type="term" value="C:tRNA methyltransferase complex"/>
    <property type="evidence" value="ECO:0007669"/>
    <property type="project" value="TreeGrafter"/>
</dbReference>
<dbReference type="GO" id="GO:0008176">
    <property type="term" value="F:tRNA (guanine(46)-N7)-methyltransferase activity"/>
    <property type="evidence" value="ECO:0007669"/>
    <property type="project" value="UniProtKB-UniRule"/>
</dbReference>
<dbReference type="CDD" id="cd02440">
    <property type="entry name" value="AdoMet_MTases"/>
    <property type="match status" value="1"/>
</dbReference>
<dbReference type="FunFam" id="3.40.50.150:FF:000035">
    <property type="entry name" value="tRNA (guanine-N(7)-)-methyltransferase"/>
    <property type="match status" value="1"/>
</dbReference>
<dbReference type="Gene3D" id="3.40.50.150">
    <property type="entry name" value="Vaccinia Virus protein VP39"/>
    <property type="match status" value="1"/>
</dbReference>
<dbReference type="HAMAP" id="MF_01057">
    <property type="entry name" value="tRNA_methyltr_TrmB"/>
    <property type="match status" value="1"/>
</dbReference>
<dbReference type="InterPro" id="IPR029063">
    <property type="entry name" value="SAM-dependent_MTases_sf"/>
</dbReference>
<dbReference type="InterPro" id="IPR003358">
    <property type="entry name" value="tRNA_(Gua-N-7)_MeTrfase_Trmb"/>
</dbReference>
<dbReference type="InterPro" id="IPR055361">
    <property type="entry name" value="tRNA_methyltr_TrmB_bact"/>
</dbReference>
<dbReference type="NCBIfam" id="NF001080">
    <property type="entry name" value="PRK00121.2-2"/>
    <property type="match status" value="1"/>
</dbReference>
<dbReference type="NCBIfam" id="TIGR00091">
    <property type="entry name" value="tRNA (guanosine(46)-N7)-methyltransferase TrmB"/>
    <property type="match status" value="1"/>
</dbReference>
<dbReference type="PANTHER" id="PTHR23417">
    <property type="entry name" value="3-DEOXY-D-MANNO-OCTULOSONIC-ACID TRANSFERASE/TRNA GUANINE-N 7 - -METHYLTRANSFERASE"/>
    <property type="match status" value="1"/>
</dbReference>
<dbReference type="PANTHER" id="PTHR23417:SF14">
    <property type="entry name" value="PENTACOTRIPEPTIDE-REPEAT REGION OF PRORP DOMAIN-CONTAINING PROTEIN"/>
    <property type="match status" value="1"/>
</dbReference>
<dbReference type="Pfam" id="PF02390">
    <property type="entry name" value="Methyltransf_4"/>
    <property type="match status" value="1"/>
</dbReference>
<dbReference type="SUPFAM" id="SSF53335">
    <property type="entry name" value="S-adenosyl-L-methionine-dependent methyltransferases"/>
    <property type="match status" value="1"/>
</dbReference>
<dbReference type="PROSITE" id="PS51625">
    <property type="entry name" value="SAM_MT_TRMB"/>
    <property type="match status" value="1"/>
</dbReference>
<reference key="1">
    <citation type="journal article" date="2003" name="Science">
        <title>Role of mobile DNA in the evolution of vancomycin-resistant Enterococcus faecalis.</title>
        <authorList>
            <person name="Paulsen I.T."/>
            <person name="Banerjei L."/>
            <person name="Myers G.S.A."/>
            <person name="Nelson K.E."/>
            <person name="Seshadri R."/>
            <person name="Read T.D."/>
            <person name="Fouts D.E."/>
            <person name="Eisen J.A."/>
            <person name="Gill S.R."/>
            <person name="Heidelberg J.F."/>
            <person name="Tettelin H."/>
            <person name="Dodson R.J."/>
            <person name="Umayam L.A."/>
            <person name="Brinkac L.M."/>
            <person name="Beanan M.J."/>
            <person name="Daugherty S.C."/>
            <person name="DeBoy R.T."/>
            <person name="Durkin S.A."/>
            <person name="Kolonay J.F."/>
            <person name="Madupu R."/>
            <person name="Nelson W.C."/>
            <person name="Vamathevan J.J."/>
            <person name="Tran B."/>
            <person name="Upton J."/>
            <person name="Hansen T."/>
            <person name="Shetty J."/>
            <person name="Khouri H.M."/>
            <person name="Utterback T.R."/>
            <person name="Radune D."/>
            <person name="Ketchum K.A."/>
            <person name="Dougherty B.A."/>
            <person name="Fraser C.M."/>
        </authorList>
    </citation>
    <scope>NUCLEOTIDE SEQUENCE [LARGE SCALE GENOMIC DNA]</scope>
    <source>
        <strain>ATCC 700802 / V583</strain>
    </source>
</reference>
<evidence type="ECO:0000250" key="1"/>
<evidence type="ECO:0000255" key="2">
    <source>
        <dbReference type="HAMAP-Rule" id="MF_01057"/>
    </source>
</evidence>
<gene>
    <name evidence="2" type="primary">trmB</name>
    <name type="ordered locus">EF_0691</name>
</gene>
<feature type="chain" id="PRO_0000171329" description="tRNA (guanine-N(7)-)-methyltransferase">
    <location>
        <begin position="1"/>
        <end position="214"/>
    </location>
</feature>
<feature type="region of interest" description="Interaction with RNA" evidence="2">
    <location>
        <begin position="124"/>
        <end position="129"/>
    </location>
</feature>
<feature type="active site" evidence="1">
    <location>
        <position position="118"/>
    </location>
</feature>
<feature type="binding site" evidence="2">
    <location>
        <position position="44"/>
    </location>
    <ligand>
        <name>S-adenosyl-L-methionine</name>
        <dbReference type="ChEBI" id="CHEBI:59789"/>
    </ligand>
</feature>
<feature type="binding site" evidence="2">
    <location>
        <position position="69"/>
    </location>
    <ligand>
        <name>S-adenosyl-L-methionine</name>
        <dbReference type="ChEBI" id="CHEBI:59789"/>
    </ligand>
</feature>
<feature type="binding site" evidence="2">
    <location>
        <position position="96"/>
    </location>
    <ligand>
        <name>S-adenosyl-L-methionine</name>
        <dbReference type="ChEBI" id="CHEBI:59789"/>
    </ligand>
</feature>
<feature type="binding site" evidence="2">
    <location>
        <position position="118"/>
    </location>
    <ligand>
        <name>S-adenosyl-L-methionine</name>
        <dbReference type="ChEBI" id="CHEBI:59789"/>
    </ligand>
</feature>
<feature type="binding site" evidence="2">
    <location>
        <position position="122"/>
    </location>
    <ligand>
        <name>substrate</name>
    </ligand>
</feature>
<feature type="binding site" evidence="2">
    <location>
        <position position="154"/>
    </location>
    <ligand>
        <name>substrate</name>
    </ligand>
</feature>
<feature type="binding site" evidence="2">
    <location>
        <begin position="191"/>
        <end position="194"/>
    </location>
    <ligand>
        <name>substrate</name>
    </ligand>
</feature>
<name>TRMB_ENTFA</name>
<protein>
    <recommendedName>
        <fullName evidence="2">tRNA (guanine-N(7)-)-methyltransferase</fullName>
        <ecNumber evidence="2">2.1.1.33</ecNumber>
    </recommendedName>
    <alternativeName>
        <fullName evidence="2">tRNA (guanine(46)-N(7))-methyltransferase</fullName>
    </alternativeName>
    <alternativeName>
        <fullName evidence="2">tRNA(m7G46)-methyltransferase</fullName>
    </alternativeName>
</protein>
<comment type="function">
    <text evidence="2">Catalyzes the formation of N(7)-methylguanine at position 46 (m7G46) in tRNA.</text>
</comment>
<comment type="catalytic activity">
    <reaction evidence="2">
        <text>guanosine(46) in tRNA + S-adenosyl-L-methionine = N(7)-methylguanosine(46) in tRNA + S-adenosyl-L-homocysteine</text>
        <dbReference type="Rhea" id="RHEA:42708"/>
        <dbReference type="Rhea" id="RHEA-COMP:10188"/>
        <dbReference type="Rhea" id="RHEA-COMP:10189"/>
        <dbReference type="ChEBI" id="CHEBI:57856"/>
        <dbReference type="ChEBI" id="CHEBI:59789"/>
        <dbReference type="ChEBI" id="CHEBI:74269"/>
        <dbReference type="ChEBI" id="CHEBI:74480"/>
        <dbReference type="EC" id="2.1.1.33"/>
    </reaction>
</comment>
<comment type="pathway">
    <text evidence="2">tRNA modification; N(7)-methylguanine-tRNA biosynthesis.</text>
</comment>
<comment type="similarity">
    <text evidence="2">Belongs to the class I-like SAM-binding methyltransferase superfamily. TrmB family.</text>
</comment>
<accession>P59719</accession>
<sequence>MRVRNRPGAAEYMAKYPQYVVEGPEKWQGKWQERFGNNHPIHIEIGSGKGRFIYEMAKAHPEINYIGIDMQLSILSIALDKLVADPLPNLQLLRVDGEALTEYFAENEVDLIYLNFSDPWPKKKHEKRRLTYKNFLATDEIILKPNGEIHFKTDNQGLFEYSLSSFSKYGMIIERVWLDLHNSEFEGNIMTEYEEKFSSRGQRIYRVEARFVAK</sequence>
<organism>
    <name type="scientific">Enterococcus faecalis (strain ATCC 700802 / V583)</name>
    <dbReference type="NCBI Taxonomy" id="226185"/>
    <lineage>
        <taxon>Bacteria</taxon>
        <taxon>Bacillati</taxon>
        <taxon>Bacillota</taxon>
        <taxon>Bacilli</taxon>
        <taxon>Lactobacillales</taxon>
        <taxon>Enterococcaceae</taxon>
        <taxon>Enterococcus</taxon>
    </lineage>
</organism>
<keyword id="KW-0489">Methyltransferase</keyword>
<keyword id="KW-1185">Reference proteome</keyword>
<keyword id="KW-0949">S-adenosyl-L-methionine</keyword>
<keyword id="KW-0808">Transferase</keyword>
<keyword id="KW-0819">tRNA processing</keyword>
<proteinExistence type="inferred from homology"/>